<evidence type="ECO:0000250" key="1"/>
<evidence type="ECO:0000255" key="2"/>
<evidence type="ECO:0000255" key="3">
    <source>
        <dbReference type="PROSITE-ProRule" id="PRU00121"/>
    </source>
</evidence>
<evidence type="ECO:0000255" key="4">
    <source>
        <dbReference type="PROSITE-ProRule" id="PRU00196"/>
    </source>
</evidence>
<evidence type="ECO:0000255" key="5">
    <source>
        <dbReference type="PROSITE-ProRule" id="PRU00274"/>
    </source>
</evidence>
<evidence type="ECO:0000256" key="6">
    <source>
        <dbReference type="SAM" id="MobiDB-lite"/>
    </source>
</evidence>
<evidence type="ECO:0007829" key="7">
    <source>
        <dbReference type="PDB" id="6H8M"/>
    </source>
</evidence>
<keyword id="KW-0002">3D-structure</keyword>
<keyword id="KW-1015">Disulfide bond</keyword>
<keyword id="KW-0325">Glycoprotein</keyword>
<keyword id="KW-0378">Hydrolase</keyword>
<keyword id="KW-0420">Kringle</keyword>
<keyword id="KW-0645">Protease</keyword>
<keyword id="KW-1185">Reference proteome</keyword>
<keyword id="KW-0677">Repeat</keyword>
<keyword id="KW-0964">Secreted</keyword>
<keyword id="KW-0720">Serine protease</keyword>
<keyword id="KW-0732">Signal</keyword>
<reference key="1">
    <citation type="journal article" date="1997" name="Mol. Cell. Neurosci.">
        <title>Neurotrypsin, a novel multidomain serine protease expressed in the nervous system.</title>
        <authorList>
            <person name="Gschwend T.P."/>
            <person name="Krueger S.R."/>
            <person name="Kozlov S.V."/>
            <person name="Wolfer D.P."/>
            <person name="Sonderegger P."/>
        </authorList>
    </citation>
    <scope>NUCLEOTIDE SEQUENCE [MRNA]</scope>
    <source>
        <tissue>Brain</tissue>
    </source>
</reference>
<reference key="2">
    <citation type="journal article" date="1997" name="Biochem. Biophys. Res. Commun.">
        <title>Molecular cloning of a novel brain-specific serine protease with a kringle-like structure and three scavenger receptor cysteine-rich motifs.</title>
        <authorList>
            <person name="Yamamura Y."/>
            <person name="Yamashiro K."/>
            <person name="Tsuruoka N."/>
            <person name="Nakazato H."/>
            <person name="Tsujimura A."/>
            <person name="Yamaguchi N."/>
        </authorList>
    </citation>
    <scope>NUCLEOTIDE SEQUENCE [MRNA]</scope>
</reference>
<reference key="3">
    <citation type="journal article" date="2004" name="Genome Res.">
        <title>The status, quality, and expansion of the NIH full-length cDNA project: the Mammalian Gene Collection (MGC).</title>
        <authorList>
            <consortium name="The MGC Project Team"/>
        </authorList>
    </citation>
    <scope>NUCLEOTIDE SEQUENCE [LARGE SCALE MRNA]</scope>
    <source>
        <strain>C57BL/6J</strain>
        <tissue>Mammary gland</tissue>
    </source>
</reference>
<protein>
    <recommendedName>
        <fullName>Neurotrypsin</fullName>
        <ecNumber>3.4.21.-</ecNumber>
    </recommendedName>
    <alternativeName>
        <fullName>Brain-specific serine protease 3</fullName>
        <shortName>BSSP-3</shortName>
    </alternativeName>
    <alternativeName>
        <fullName>Motopsin</fullName>
    </alternativeName>
    <alternativeName>
        <fullName>Serine protease 12</fullName>
    </alternativeName>
</protein>
<organism>
    <name type="scientific">Mus musculus</name>
    <name type="common">Mouse</name>
    <dbReference type="NCBI Taxonomy" id="10090"/>
    <lineage>
        <taxon>Eukaryota</taxon>
        <taxon>Metazoa</taxon>
        <taxon>Chordata</taxon>
        <taxon>Craniata</taxon>
        <taxon>Vertebrata</taxon>
        <taxon>Euteleostomi</taxon>
        <taxon>Mammalia</taxon>
        <taxon>Eutheria</taxon>
        <taxon>Euarchontoglires</taxon>
        <taxon>Glires</taxon>
        <taxon>Rodentia</taxon>
        <taxon>Myomorpha</taxon>
        <taxon>Muroidea</taxon>
        <taxon>Muridae</taxon>
        <taxon>Murinae</taxon>
        <taxon>Mus</taxon>
        <taxon>Mus</taxon>
    </lineage>
</organism>
<comment type="function">
    <text>Plays a role in neuronal plasticity and the proteolytic action may subserve structural reorganizations associated with learning and memory operations.</text>
</comment>
<comment type="subcellular location">
    <subcellularLocation>
        <location>Secreted</location>
    </subcellularLocation>
</comment>
<comment type="tissue specificity">
    <text>Most abundant in cerebral cortex, hippocampus and amygdala.</text>
</comment>
<comment type="similarity">
    <text evidence="5">Belongs to the peptidase S1 family.</text>
</comment>
<accession>O08762</accession>
<dbReference type="EC" id="3.4.21.-"/>
<dbReference type="EMBL" id="Y13192">
    <property type="protein sequence ID" value="CAA73646.1"/>
    <property type="molecule type" value="mRNA"/>
</dbReference>
<dbReference type="EMBL" id="D89871">
    <property type="protein sequence ID" value="BAA23986.1"/>
    <property type="molecule type" value="mRNA"/>
</dbReference>
<dbReference type="EMBL" id="BC031429">
    <property type="protein sequence ID" value="AAH31429.1"/>
    <property type="molecule type" value="mRNA"/>
</dbReference>
<dbReference type="CCDS" id="CCDS17817.1"/>
<dbReference type="PIR" id="JC5759">
    <property type="entry name" value="JC5759"/>
</dbReference>
<dbReference type="RefSeq" id="NP_032965.1">
    <property type="nucleotide sequence ID" value="NM_008939.2"/>
</dbReference>
<dbReference type="PDB" id="6H8M">
    <property type="method" value="X-ray"/>
    <property type="resolution" value="1.70 A"/>
    <property type="chains" value="A/B=383-494"/>
</dbReference>
<dbReference type="PDBsum" id="6H8M"/>
<dbReference type="BMRB" id="O08762"/>
<dbReference type="SASBDB" id="O08762"/>
<dbReference type="SMR" id="O08762"/>
<dbReference type="BioGRID" id="202403">
    <property type="interactions" value="2"/>
</dbReference>
<dbReference type="FunCoup" id="O08762">
    <property type="interactions" value="58"/>
</dbReference>
<dbReference type="STRING" id="10090.ENSMUSP00000029603"/>
<dbReference type="MEROPS" id="S01.237"/>
<dbReference type="GlyCosmos" id="O08762">
    <property type="glycosylation" value="3 sites, No reported glycans"/>
</dbReference>
<dbReference type="GlyGen" id="O08762">
    <property type="glycosylation" value="3 sites"/>
</dbReference>
<dbReference type="PhosphoSitePlus" id="O08762"/>
<dbReference type="SwissPalm" id="O08762"/>
<dbReference type="PaxDb" id="10090-ENSMUSP00000029603"/>
<dbReference type="PeptideAtlas" id="O08762"/>
<dbReference type="ProteomicsDB" id="287382"/>
<dbReference type="Antibodypedia" id="26601">
    <property type="antibodies" value="128 antibodies from 25 providers"/>
</dbReference>
<dbReference type="DNASU" id="19142"/>
<dbReference type="Ensembl" id="ENSMUST00000029603.10">
    <property type="protein sequence ID" value="ENSMUSP00000029603.9"/>
    <property type="gene ID" value="ENSMUSG00000027978.10"/>
</dbReference>
<dbReference type="GeneID" id="19142"/>
<dbReference type="KEGG" id="mmu:19142"/>
<dbReference type="UCSC" id="uc008rfl.2">
    <property type="organism name" value="mouse"/>
</dbReference>
<dbReference type="AGR" id="MGI:1100881"/>
<dbReference type="CTD" id="8492"/>
<dbReference type="MGI" id="MGI:1100881">
    <property type="gene designation" value="Prss12"/>
</dbReference>
<dbReference type="VEuPathDB" id="HostDB:ENSMUSG00000027978"/>
<dbReference type="eggNOG" id="KOG3627">
    <property type="taxonomic scope" value="Eukaryota"/>
</dbReference>
<dbReference type="GeneTree" id="ENSGT00940000158131"/>
<dbReference type="HOGENOM" id="CLU_013656_0_0_1"/>
<dbReference type="InParanoid" id="O08762"/>
<dbReference type="OMA" id="GPIHADN"/>
<dbReference type="OrthoDB" id="536948at2759"/>
<dbReference type="PhylomeDB" id="O08762"/>
<dbReference type="TreeFam" id="TF329295"/>
<dbReference type="BioGRID-ORCS" id="19142">
    <property type="hits" value="3 hits in 76 CRISPR screens"/>
</dbReference>
<dbReference type="ChiTaRS" id="Prss12">
    <property type="organism name" value="mouse"/>
</dbReference>
<dbReference type="PRO" id="PR:O08762"/>
<dbReference type="Proteomes" id="UP000000589">
    <property type="component" value="Chromosome 3"/>
</dbReference>
<dbReference type="RNAct" id="O08762">
    <property type="molecule type" value="protein"/>
</dbReference>
<dbReference type="Bgee" id="ENSMUSG00000027978">
    <property type="expression patterns" value="Expressed in sciatic nerve and 178 other cell types or tissues"/>
</dbReference>
<dbReference type="GO" id="GO:0030424">
    <property type="term" value="C:axon"/>
    <property type="evidence" value="ECO:0000314"/>
    <property type="project" value="UniProtKB"/>
</dbReference>
<dbReference type="GO" id="GO:0031410">
    <property type="term" value="C:cytoplasmic vesicle"/>
    <property type="evidence" value="ECO:0000314"/>
    <property type="project" value="MGI"/>
</dbReference>
<dbReference type="GO" id="GO:0030425">
    <property type="term" value="C:dendrite"/>
    <property type="evidence" value="ECO:0000314"/>
    <property type="project" value="MGI"/>
</dbReference>
<dbReference type="GO" id="GO:0098978">
    <property type="term" value="C:glutamatergic synapse"/>
    <property type="evidence" value="ECO:0000314"/>
    <property type="project" value="SynGO"/>
</dbReference>
<dbReference type="GO" id="GO:0005886">
    <property type="term" value="C:plasma membrane"/>
    <property type="evidence" value="ECO:0000314"/>
    <property type="project" value="UniProtKB"/>
</dbReference>
<dbReference type="GO" id="GO:0098793">
    <property type="term" value="C:presynapse"/>
    <property type="evidence" value="ECO:0000314"/>
    <property type="project" value="SynGO"/>
</dbReference>
<dbReference type="GO" id="GO:0098685">
    <property type="term" value="C:Schaffer collateral - CA1 synapse"/>
    <property type="evidence" value="ECO:0000314"/>
    <property type="project" value="SynGO"/>
</dbReference>
<dbReference type="GO" id="GO:0045202">
    <property type="term" value="C:synapse"/>
    <property type="evidence" value="ECO:0000314"/>
    <property type="project" value="MGI"/>
</dbReference>
<dbReference type="GO" id="GO:0043083">
    <property type="term" value="C:synaptic cleft"/>
    <property type="evidence" value="ECO:0000314"/>
    <property type="project" value="MGI"/>
</dbReference>
<dbReference type="GO" id="GO:0043195">
    <property type="term" value="C:terminal bouton"/>
    <property type="evidence" value="ECO:0000314"/>
    <property type="project" value="MGI"/>
</dbReference>
<dbReference type="GO" id="GO:0008233">
    <property type="term" value="F:peptidase activity"/>
    <property type="evidence" value="ECO:0000315"/>
    <property type="project" value="MGI"/>
</dbReference>
<dbReference type="GO" id="GO:0004252">
    <property type="term" value="F:serine-type endopeptidase activity"/>
    <property type="evidence" value="ECO:0000314"/>
    <property type="project" value="MGI"/>
</dbReference>
<dbReference type="GO" id="GO:0006887">
    <property type="term" value="P:exocytosis"/>
    <property type="evidence" value="ECO:0000314"/>
    <property type="project" value="UniProtKB"/>
</dbReference>
<dbReference type="GO" id="GO:0006508">
    <property type="term" value="P:proteolysis"/>
    <property type="evidence" value="ECO:0000314"/>
    <property type="project" value="MGI"/>
</dbReference>
<dbReference type="GO" id="GO:0031638">
    <property type="term" value="P:zymogen activation"/>
    <property type="evidence" value="ECO:0000314"/>
    <property type="project" value="MGI"/>
</dbReference>
<dbReference type="CDD" id="cd00190">
    <property type="entry name" value="Tryp_SPc"/>
    <property type="match status" value="1"/>
</dbReference>
<dbReference type="FunFam" id="2.40.10.10:FF:000053">
    <property type="entry name" value="Neurotrypsin"/>
    <property type="match status" value="1"/>
</dbReference>
<dbReference type="FunFam" id="2.40.20.10:FF:000010">
    <property type="entry name" value="Neurotrypsin"/>
    <property type="match status" value="1"/>
</dbReference>
<dbReference type="FunFam" id="3.10.250.10:FF:000005">
    <property type="entry name" value="Neurotrypsin isoform A"/>
    <property type="match status" value="2"/>
</dbReference>
<dbReference type="FunFam" id="3.10.250.10:FF:000006">
    <property type="entry name" value="neurotrypsin isoform X2"/>
    <property type="match status" value="1"/>
</dbReference>
<dbReference type="Gene3D" id="2.40.20.10">
    <property type="entry name" value="Plasminogen Kringle 4"/>
    <property type="match status" value="1"/>
</dbReference>
<dbReference type="Gene3D" id="3.10.250.10">
    <property type="entry name" value="SRCR-like domain"/>
    <property type="match status" value="3"/>
</dbReference>
<dbReference type="Gene3D" id="2.40.10.10">
    <property type="entry name" value="Trypsin-like serine proteases"/>
    <property type="match status" value="1"/>
</dbReference>
<dbReference type="InterPro" id="IPR000001">
    <property type="entry name" value="Kringle"/>
</dbReference>
<dbReference type="InterPro" id="IPR013806">
    <property type="entry name" value="Kringle-like"/>
</dbReference>
<dbReference type="InterPro" id="IPR018056">
    <property type="entry name" value="Kringle_CS"/>
</dbReference>
<dbReference type="InterPro" id="IPR038178">
    <property type="entry name" value="Kringle_sf"/>
</dbReference>
<dbReference type="InterPro" id="IPR009003">
    <property type="entry name" value="Peptidase_S1_PA"/>
</dbReference>
<dbReference type="InterPro" id="IPR043504">
    <property type="entry name" value="Peptidase_S1_PA_chymotrypsin"/>
</dbReference>
<dbReference type="InterPro" id="IPR001314">
    <property type="entry name" value="Peptidase_S1A"/>
</dbReference>
<dbReference type="InterPro" id="IPR001190">
    <property type="entry name" value="SRCR"/>
</dbReference>
<dbReference type="InterPro" id="IPR036772">
    <property type="entry name" value="SRCR-like_dom_sf"/>
</dbReference>
<dbReference type="InterPro" id="IPR001254">
    <property type="entry name" value="Trypsin_dom"/>
</dbReference>
<dbReference type="InterPro" id="IPR018114">
    <property type="entry name" value="TRYPSIN_HIS"/>
</dbReference>
<dbReference type="InterPro" id="IPR033116">
    <property type="entry name" value="TRYPSIN_SER"/>
</dbReference>
<dbReference type="PANTHER" id="PTHR19331:SF22">
    <property type="entry name" value="DELETED IN MALIGNANT BRAIN TUMORS 1 PROTEIN"/>
    <property type="match status" value="1"/>
</dbReference>
<dbReference type="PANTHER" id="PTHR19331">
    <property type="entry name" value="SCAVENGER RECEPTOR DOMAIN-CONTAINING"/>
    <property type="match status" value="1"/>
</dbReference>
<dbReference type="Pfam" id="PF00051">
    <property type="entry name" value="Kringle"/>
    <property type="match status" value="1"/>
</dbReference>
<dbReference type="Pfam" id="PF00530">
    <property type="entry name" value="SRCR"/>
    <property type="match status" value="3"/>
</dbReference>
<dbReference type="Pfam" id="PF00089">
    <property type="entry name" value="Trypsin"/>
    <property type="match status" value="1"/>
</dbReference>
<dbReference type="PRINTS" id="PR00722">
    <property type="entry name" value="CHYMOTRYPSIN"/>
</dbReference>
<dbReference type="PRINTS" id="PR00258">
    <property type="entry name" value="SPERACTRCPTR"/>
</dbReference>
<dbReference type="SMART" id="SM00130">
    <property type="entry name" value="KR"/>
    <property type="match status" value="1"/>
</dbReference>
<dbReference type="SMART" id="SM00202">
    <property type="entry name" value="SR"/>
    <property type="match status" value="3"/>
</dbReference>
<dbReference type="SMART" id="SM00020">
    <property type="entry name" value="Tryp_SPc"/>
    <property type="match status" value="1"/>
</dbReference>
<dbReference type="SUPFAM" id="SSF57440">
    <property type="entry name" value="Kringle-like"/>
    <property type="match status" value="1"/>
</dbReference>
<dbReference type="SUPFAM" id="SSF56487">
    <property type="entry name" value="SRCR-like"/>
    <property type="match status" value="3"/>
</dbReference>
<dbReference type="SUPFAM" id="SSF50494">
    <property type="entry name" value="Trypsin-like serine proteases"/>
    <property type="match status" value="1"/>
</dbReference>
<dbReference type="PROSITE" id="PS00021">
    <property type="entry name" value="KRINGLE_1"/>
    <property type="match status" value="1"/>
</dbReference>
<dbReference type="PROSITE" id="PS50070">
    <property type="entry name" value="KRINGLE_2"/>
    <property type="match status" value="1"/>
</dbReference>
<dbReference type="PROSITE" id="PS00420">
    <property type="entry name" value="SRCR_1"/>
    <property type="match status" value="3"/>
</dbReference>
<dbReference type="PROSITE" id="PS50287">
    <property type="entry name" value="SRCR_2"/>
    <property type="match status" value="3"/>
</dbReference>
<dbReference type="PROSITE" id="PS50240">
    <property type="entry name" value="TRYPSIN_DOM"/>
    <property type="match status" value="1"/>
</dbReference>
<dbReference type="PROSITE" id="PS00134">
    <property type="entry name" value="TRYPSIN_HIS"/>
    <property type="match status" value="1"/>
</dbReference>
<dbReference type="PROSITE" id="PS00135">
    <property type="entry name" value="TRYPSIN_SER"/>
    <property type="match status" value="1"/>
</dbReference>
<gene>
    <name type="primary">Prss12</name>
    <name type="synonym">Bssp3</name>
</gene>
<proteinExistence type="evidence at protein level"/>
<name>NETR_MOUSE</name>
<sequence>MALARCVLAVILGALSVVARADPVSRSPLHRPHPSPPRSQHAHYLPSSRRPPRTPRFPLPLRIPAAQRPQVLSTGHTPPTIPRRCGAGESWGNATNLGVPCLHWDEVPPFLERSPPASWAELRGQPHNFCRSPDGSGRPWCFYRNAQGKVDWGYCDCGQGPALPVIRLVGGNSGHEGRVELYHAGQWGTICDDQWDNADADVICRQLGLSGIAKAWHQAHFGEGSGPILLDEVRCTGNELSIEQCPKSSWGEHNCGHKEDAGVSCVPLTDGVIRLAGGKSTHEGRLEVYYKGQWGTVCDDGWTEMNTYVACRLLGFKYGKQSSVNHFDGSNRPIWLDDVSCSGKEVSFIQCSRRQWGRHDCSHREDVGLTCYPDSDGHRLSPGFPIRLVDGENKKEGRVEVFVNGQWGTICDDGWTDKHAAVICRQLGYKGPARARTMAYFGEGKGPIHMDNVKCTGNEKALADCVKQDIGRHNCRHSEDAGVICDYLEKKASSSGNKEMLSSGCGLRLLHRRQKRIIGGNNSLRGAWPWQASLRLRSAHGDGRLLCGATLLSSCWVLTAAHCFKRYGNNSRSYAVRVGDYHTLVPEEFEQEIGVQQIVIHRNYRPDRSDYDIALVRLQGPGEQCARLSTHVLPACLPLWRERPQKTASNCHITGWGDTGRAYSRTLQQAAVPLLPKRFCKERYKGLFTGRMLCAGNLQEDNRVDSCQGDSGGPLMCEKPDESWVVYGVTSWGYGCGVKDTPGVYTRVPAFVPWIKSVTSL</sequence>
<feature type="signal peptide" evidence="2">
    <location>
        <begin position="1"/>
        <end position="21"/>
    </location>
</feature>
<feature type="chain" id="PRO_0000027670" description="Neurotrypsin">
    <location>
        <begin position="22"/>
        <end position="761"/>
    </location>
</feature>
<feature type="domain" description="Kringle" evidence="3">
    <location>
        <begin position="85"/>
        <end position="157"/>
    </location>
</feature>
<feature type="domain" description="SRCR 1" evidence="4">
    <location>
        <begin position="166"/>
        <end position="267"/>
    </location>
</feature>
<feature type="domain" description="SRCR 2" evidence="4">
    <location>
        <begin position="273"/>
        <end position="373"/>
    </location>
</feature>
<feature type="domain" description="SRCR 3" evidence="4">
    <location>
        <begin position="386"/>
        <end position="487"/>
    </location>
</feature>
<feature type="domain" description="Peptidase S1" evidence="5">
    <location>
        <begin position="517"/>
        <end position="760"/>
    </location>
</feature>
<feature type="region of interest" description="Disordered" evidence="6">
    <location>
        <begin position="25"/>
        <end position="87"/>
    </location>
</feature>
<feature type="region of interest" description="Zymogen activation region">
    <location>
        <begin position="505"/>
        <end position="516"/>
    </location>
</feature>
<feature type="compositionally biased region" description="Low complexity" evidence="6">
    <location>
        <begin position="38"/>
        <end position="48"/>
    </location>
</feature>
<feature type="active site" description="Charge relay system">
    <location>
        <position position="562"/>
    </location>
</feature>
<feature type="active site" description="Charge relay system">
    <location>
        <position position="612"/>
    </location>
</feature>
<feature type="active site" description="Charge relay system">
    <location>
        <position position="711"/>
    </location>
</feature>
<feature type="site" description="Reactive bond homolog" evidence="2">
    <location>
        <begin position="516"/>
        <end position="517"/>
    </location>
</feature>
<feature type="glycosylation site" description="N-linked (GlcNAc...) asparagine" evidence="2">
    <location>
        <position position="93"/>
    </location>
</feature>
<feature type="glycosylation site" description="N-linked (GlcNAc...) asparagine" evidence="2">
    <location>
        <position position="521"/>
    </location>
</feature>
<feature type="glycosylation site" description="N-linked (GlcNAc...) asparagine" evidence="2">
    <location>
        <position position="569"/>
    </location>
</feature>
<feature type="disulfide bond" evidence="1">
    <location>
        <begin position="85"/>
        <end position="157"/>
    </location>
</feature>
<feature type="disulfide bond" evidence="1">
    <location>
        <begin position="101"/>
        <end position="141"/>
    </location>
</feature>
<feature type="disulfide bond" evidence="1">
    <location>
        <begin position="130"/>
        <end position="155"/>
    </location>
</feature>
<feature type="disulfide bond" evidence="1">
    <location>
        <begin position="191"/>
        <end position="255"/>
    </location>
</feature>
<feature type="disulfide bond" evidence="1">
    <location>
        <begin position="204"/>
        <end position="265"/>
    </location>
</feature>
<feature type="disulfide bond" evidence="1">
    <location>
        <begin position="235"/>
        <end position="245"/>
    </location>
</feature>
<feature type="disulfide bond" evidence="1">
    <location>
        <begin position="298"/>
        <end position="361"/>
    </location>
</feature>
<feature type="disulfide bond" evidence="1">
    <location>
        <begin position="311"/>
        <end position="371"/>
    </location>
</feature>
<feature type="disulfide bond" evidence="1">
    <location>
        <begin position="341"/>
        <end position="351"/>
    </location>
</feature>
<feature type="disulfide bond" evidence="1">
    <location>
        <begin position="411"/>
        <end position="475"/>
    </location>
</feature>
<feature type="disulfide bond" evidence="1">
    <location>
        <begin position="424"/>
        <end position="485"/>
    </location>
</feature>
<feature type="disulfide bond" evidence="1">
    <location>
        <begin position="455"/>
        <end position="465"/>
    </location>
</feature>
<feature type="disulfide bond" evidence="2">
    <location>
        <begin position="505"/>
        <end position="636"/>
    </location>
</feature>
<feature type="disulfide bond" evidence="1">
    <location>
        <begin position="547"/>
        <end position="563"/>
    </location>
</feature>
<feature type="disulfide bond" evidence="1">
    <location>
        <begin position="651"/>
        <end position="717"/>
    </location>
</feature>
<feature type="disulfide bond" evidence="1">
    <location>
        <begin position="680"/>
        <end position="694"/>
    </location>
</feature>
<feature type="disulfide bond" evidence="1">
    <location>
        <begin position="707"/>
        <end position="736"/>
    </location>
</feature>
<feature type="strand" evidence="7">
    <location>
        <begin position="386"/>
        <end position="390"/>
    </location>
</feature>
<feature type="strand" evidence="7">
    <location>
        <begin position="396"/>
        <end position="403"/>
    </location>
</feature>
<feature type="strand" evidence="7">
    <location>
        <begin position="406"/>
        <end position="411"/>
    </location>
</feature>
<feature type="helix" evidence="7">
    <location>
        <begin position="417"/>
        <end position="426"/>
    </location>
</feature>
<feature type="strand" evidence="7">
    <location>
        <begin position="433"/>
        <end position="436"/>
    </location>
</feature>
<feature type="strand" evidence="7">
    <location>
        <begin position="448"/>
        <end position="451"/>
    </location>
</feature>
<feature type="helix" evidence="7">
    <location>
        <begin position="462"/>
        <end position="464"/>
    </location>
</feature>
<feature type="strand" evidence="7">
    <location>
        <begin position="465"/>
        <end position="467"/>
    </location>
</feature>
<feature type="helix" evidence="7">
    <location>
        <begin position="477"/>
        <end position="479"/>
    </location>
</feature>
<feature type="strand" evidence="7">
    <location>
        <begin position="482"/>
        <end position="486"/>
    </location>
</feature>